<keyword id="KW-0997">Cell inner membrane</keyword>
<keyword id="KW-1003">Cell membrane</keyword>
<keyword id="KW-0143">Chaperone</keyword>
<keyword id="KW-0472">Membrane</keyword>
<keyword id="KW-0653">Protein transport</keyword>
<keyword id="KW-1185">Reference proteome</keyword>
<keyword id="KW-0812">Transmembrane</keyword>
<keyword id="KW-1133">Transmembrane helix</keyword>
<keyword id="KW-0813">Transport</keyword>
<protein>
    <recommendedName>
        <fullName evidence="1">Membrane protein insertase YidC</fullName>
    </recommendedName>
    <alternativeName>
        <fullName evidence="1">Foldase YidC</fullName>
    </alternativeName>
    <alternativeName>
        <fullName evidence="1">Membrane integrase YidC</fullName>
    </alternativeName>
    <alternativeName>
        <fullName evidence="1">Membrane protein YidC</fullName>
    </alternativeName>
</protein>
<gene>
    <name evidence="1" type="primary">yidC</name>
    <name type="ordered locus">SAR11_0466</name>
</gene>
<organism>
    <name type="scientific">Pelagibacter ubique (strain HTCC1062)</name>
    <dbReference type="NCBI Taxonomy" id="335992"/>
    <lineage>
        <taxon>Bacteria</taxon>
        <taxon>Pseudomonadati</taxon>
        <taxon>Pseudomonadota</taxon>
        <taxon>Alphaproteobacteria</taxon>
        <taxon>Candidatus Pelagibacterales</taxon>
        <taxon>Candidatus Pelagibacteraceae</taxon>
        <taxon>Candidatus Pelagibacter</taxon>
    </lineage>
</organism>
<sequence length="558" mass="63931">MDTRNVIAAISLSAAVIILYSLFFQPDPATIKKNLAEQNKIENNEDTPSLDKNENFSKLSRADALKENDRIQFENGSVVGSISLKGAAIDDLTFKEYNIELNRNEKITLLSPRNVEDGYLIESGFVSTNKNIDIPDASTVWEVSGNNKLTNNNPVKLTWSNTQGITFEKHISLDDQFLFTVKEKIINSSDKSYNFYSYGQIIRNELPEISGFYILHEGFLSVLDDELIEEDYDDIQDKKFTQIAQDGFVAISDKFWVTSVIPPKGKEFKTTFDYKNKFRANYISTKGIEVKANSSIEEKIQIIVAAKRVNVIDGYAENLNINKFDLAIDWGFMYFITKPLFFVLDYFFKLLGNYGLAIIAVTICIRLAFFPLANFSFKSMGKMKLLAPEMARLKELHKDDKMKLQQAMMALYKKEKVNPMSGCLPILVQIPVFFALYKVLFVTIEMRHMPFYGWIHDLSDRDPTSLFNVFGLIPWDPPSFLLIGAWPIIMGITMWIQQKLNPTPPDPIQAKIFMFFPVFLTVILAPFPAGLVIYWSFNNIFTMIQQYIVQRKMTIKTT</sequence>
<proteinExistence type="inferred from homology"/>
<comment type="function">
    <text evidence="1">Required for the insertion and/or proper folding and/or complex formation of integral membrane proteins into the membrane. Involved in integration of membrane proteins that insert both dependently and independently of the Sec translocase complex, as well as at least some lipoproteins. Aids folding of multispanning membrane proteins.</text>
</comment>
<comment type="subunit">
    <text evidence="1">Interacts with the Sec translocase complex via SecD. Specifically interacts with transmembrane segments of nascent integral membrane proteins during membrane integration.</text>
</comment>
<comment type="subcellular location">
    <subcellularLocation>
        <location evidence="1">Cell inner membrane</location>
        <topology evidence="1">Multi-pass membrane protein</topology>
    </subcellularLocation>
</comment>
<comment type="similarity">
    <text evidence="1">Belongs to the OXA1/ALB3/YidC family. Type 1 subfamily.</text>
</comment>
<evidence type="ECO:0000255" key="1">
    <source>
        <dbReference type="HAMAP-Rule" id="MF_01810"/>
    </source>
</evidence>
<accession>Q4FNF1</accession>
<name>YIDC_PELUB</name>
<feature type="chain" id="PRO_1000187685" description="Membrane protein insertase YidC">
    <location>
        <begin position="1"/>
        <end position="558"/>
    </location>
</feature>
<feature type="transmembrane region" description="Helical" evidence="1">
    <location>
        <begin position="6"/>
        <end position="26"/>
    </location>
</feature>
<feature type="transmembrane region" description="Helical" evidence="1">
    <location>
        <begin position="326"/>
        <end position="348"/>
    </location>
</feature>
<feature type="transmembrane region" description="Helical" evidence="1">
    <location>
        <begin position="355"/>
        <end position="377"/>
    </location>
</feature>
<feature type="transmembrane region" description="Helical" evidence="1">
    <location>
        <begin position="424"/>
        <end position="444"/>
    </location>
</feature>
<feature type="transmembrane region" description="Helical" evidence="1">
    <location>
        <begin position="469"/>
        <end position="489"/>
    </location>
</feature>
<feature type="transmembrane region" description="Helical" evidence="1">
    <location>
        <begin position="512"/>
        <end position="532"/>
    </location>
</feature>
<dbReference type="EMBL" id="CP000084">
    <property type="protein sequence ID" value="AAZ21288.1"/>
    <property type="molecule type" value="Genomic_DNA"/>
</dbReference>
<dbReference type="RefSeq" id="WP_011281732.1">
    <property type="nucleotide sequence ID" value="NC_007205.1"/>
</dbReference>
<dbReference type="SMR" id="Q4FNF1"/>
<dbReference type="STRING" id="335992.SAR11_0466"/>
<dbReference type="GeneID" id="66294965"/>
<dbReference type="KEGG" id="pub:SAR11_0466"/>
<dbReference type="eggNOG" id="COG0706">
    <property type="taxonomic scope" value="Bacteria"/>
</dbReference>
<dbReference type="HOGENOM" id="CLU_016535_1_0_5"/>
<dbReference type="OrthoDB" id="9780552at2"/>
<dbReference type="Proteomes" id="UP000002528">
    <property type="component" value="Chromosome"/>
</dbReference>
<dbReference type="GO" id="GO:0005886">
    <property type="term" value="C:plasma membrane"/>
    <property type="evidence" value="ECO:0007669"/>
    <property type="project" value="UniProtKB-SubCell"/>
</dbReference>
<dbReference type="GO" id="GO:0032977">
    <property type="term" value="F:membrane insertase activity"/>
    <property type="evidence" value="ECO:0007669"/>
    <property type="project" value="InterPro"/>
</dbReference>
<dbReference type="GO" id="GO:0051205">
    <property type="term" value="P:protein insertion into membrane"/>
    <property type="evidence" value="ECO:0007669"/>
    <property type="project" value="TreeGrafter"/>
</dbReference>
<dbReference type="GO" id="GO:0015031">
    <property type="term" value="P:protein transport"/>
    <property type="evidence" value="ECO:0007669"/>
    <property type="project" value="UniProtKB-KW"/>
</dbReference>
<dbReference type="CDD" id="cd20070">
    <property type="entry name" value="5TM_YidC_Alb3"/>
    <property type="match status" value="1"/>
</dbReference>
<dbReference type="CDD" id="cd19961">
    <property type="entry name" value="EcYidC-like_peri"/>
    <property type="match status" value="1"/>
</dbReference>
<dbReference type="Gene3D" id="2.70.98.90">
    <property type="match status" value="1"/>
</dbReference>
<dbReference type="HAMAP" id="MF_01810">
    <property type="entry name" value="YidC_type1"/>
    <property type="match status" value="1"/>
</dbReference>
<dbReference type="InterPro" id="IPR019998">
    <property type="entry name" value="Membr_insert_YidC"/>
</dbReference>
<dbReference type="InterPro" id="IPR028053">
    <property type="entry name" value="Membr_insert_YidC_N"/>
</dbReference>
<dbReference type="InterPro" id="IPR001708">
    <property type="entry name" value="YidC/ALB3/OXA1/COX18"/>
</dbReference>
<dbReference type="InterPro" id="IPR028055">
    <property type="entry name" value="YidC/Oxa/ALB_C"/>
</dbReference>
<dbReference type="InterPro" id="IPR047196">
    <property type="entry name" value="YidC_ALB_C"/>
</dbReference>
<dbReference type="InterPro" id="IPR038221">
    <property type="entry name" value="YidC_periplasmic_sf"/>
</dbReference>
<dbReference type="NCBIfam" id="NF002353">
    <property type="entry name" value="PRK01318.1-4"/>
    <property type="match status" value="1"/>
</dbReference>
<dbReference type="NCBIfam" id="TIGR03593">
    <property type="entry name" value="yidC_nterm"/>
    <property type="match status" value="1"/>
</dbReference>
<dbReference type="NCBIfam" id="TIGR03592">
    <property type="entry name" value="yidC_oxa1_cterm"/>
    <property type="match status" value="1"/>
</dbReference>
<dbReference type="PANTHER" id="PTHR12428:SF65">
    <property type="entry name" value="CYTOCHROME C OXIDASE ASSEMBLY PROTEIN COX18, MITOCHONDRIAL"/>
    <property type="match status" value="1"/>
</dbReference>
<dbReference type="PANTHER" id="PTHR12428">
    <property type="entry name" value="OXA1"/>
    <property type="match status" value="1"/>
</dbReference>
<dbReference type="Pfam" id="PF02096">
    <property type="entry name" value="60KD_IMP"/>
    <property type="match status" value="1"/>
</dbReference>
<dbReference type="Pfam" id="PF14849">
    <property type="entry name" value="YidC_periplas"/>
    <property type="match status" value="1"/>
</dbReference>
<dbReference type="PRINTS" id="PR01900">
    <property type="entry name" value="YIDCPROTEIN"/>
</dbReference>
<reference key="1">
    <citation type="journal article" date="2005" name="Science">
        <title>Genome streamlining in a cosmopolitan oceanic bacterium.</title>
        <authorList>
            <person name="Giovannoni S.J."/>
            <person name="Tripp H.J."/>
            <person name="Givan S."/>
            <person name="Podar M."/>
            <person name="Vergin K.L."/>
            <person name="Baptista D."/>
            <person name="Bibbs L."/>
            <person name="Eads J."/>
            <person name="Richardson T.H."/>
            <person name="Noordewier M."/>
            <person name="Rappe M.S."/>
            <person name="Short J.M."/>
            <person name="Carrington J.C."/>
            <person name="Mathur E.J."/>
        </authorList>
    </citation>
    <scope>NUCLEOTIDE SEQUENCE [LARGE SCALE GENOMIC DNA]</scope>
    <source>
        <strain>HTCC1062</strain>
    </source>
</reference>